<reference key="1">
    <citation type="submission" date="2008-01" db="EMBL/GenBank/DDBJ databases">
        <title>Complete sequence of Pseudomonas putida GB-1.</title>
        <authorList>
            <consortium name="US DOE Joint Genome Institute"/>
            <person name="Copeland A."/>
            <person name="Lucas S."/>
            <person name="Lapidus A."/>
            <person name="Barry K."/>
            <person name="Glavina del Rio T."/>
            <person name="Dalin E."/>
            <person name="Tice H."/>
            <person name="Pitluck S."/>
            <person name="Bruce D."/>
            <person name="Goodwin L."/>
            <person name="Chertkov O."/>
            <person name="Brettin T."/>
            <person name="Detter J.C."/>
            <person name="Han C."/>
            <person name="Kuske C.R."/>
            <person name="Schmutz J."/>
            <person name="Larimer F."/>
            <person name="Land M."/>
            <person name="Hauser L."/>
            <person name="Kyrpides N."/>
            <person name="Kim E."/>
            <person name="McCarthy J.K."/>
            <person name="Richardson P."/>
        </authorList>
    </citation>
    <scope>NUCLEOTIDE SEQUENCE [LARGE SCALE GENOMIC DNA]</scope>
    <source>
        <strain>GB-1</strain>
    </source>
</reference>
<comment type="function">
    <text evidence="1">Produces ATP from ADP in the presence of a proton gradient across the membrane. The gamma chain is believed to be important in regulating ATPase activity and the flow of protons through the CF(0) complex.</text>
</comment>
<comment type="subunit">
    <text evidence="1">F-type ATPases have 2 components, CF(1) - the catalytic core - and CF(0) - the membrane proton channel. CF(1) has five subunits: alpha(3), beta(3), gamma(1), delta(1), epsilon(1). CF(0) has three main subunits: a, b and c.</text>
</comment>
<comment type="subcellular location">
    <subcellularLocation>
        <location evidence="1">Cell inner membrane</location>
        <topology evidence="1">Peripheral membrane protein</topology>
    </subcellularLocation>
</comment>
<comment type="similarity">
    <text evidence="1">Belongs to the ATPase gamma chain family.</text>
</comment>
<name>ATPG_PSEPG</name>
<keyword id="KW-0066">ATP synthesis</keyword>
<keyword id="KW-0997">Cell inner membrane</keyword>
<keyword id="KW-1003">Cell membrane</keyword>
<keyword id="KW-0139">CF(1)</keyword>
<keyword id="KW-0375">Hydrogen ion transport</keyword>
<keyword id="KW-0406">Ion transport</keyword>
<keyword id="KW-0472">Membrane</keyword>
<keyword id="KW-0813">Transport</keyword>
<organism>
    <name type="scientific">Pseudomonas putida (strain GB-1)</name>
    <dbReference type="NCBI Taxonomy" id="76869"/>
    <lineage>
        <taxon>Bacteria</taxon>
        <taxon>Pseudomonadati</taxon>
        <taxon>Pseudomonadota</taxon>
        <taxon>Gammaproteobacteria</taxon>
        <taxon>Pseudomonadales</taxon>
        <taxon>Pseudomonadaceae</taxon>
        <taxon>Pseudomonas</taxon>
    </lineage>
</organism>
<proteinExistence type="inferred from homology"/>
<sequence length="286" mass="31559">MAGAKEIRSKIASIKSTQKITSAMEKVAVSKMRRAQLRMAASRPYAERIRQVIGHLANANPEYRHPFMIERPVKRAGYIVVSSDRGLCGGLNTNLFKALVKDMNENREQGVEIDLCVIGSKGATFFRIFGGNVVAAISHLGEEPSINDLIGSVKVMLDAYLDGRIDRLSVVSNKFINTMTQKPTVEQLVPLVATPDQDLKHHWDYLYEPDAKELLDGLMVRYVESQVYQAVVENNAAEQAARMIAMKNATDNAGDLIKELQLIYNKARQAAITQEISEIVGGAAAV</sequence>
<protein>
    <recommendedName>
        <fullName evidence="1">ATP synthase gamma chain</fullName>
    </recommendedName>
    <alternativeName>
        <fullName evidence="1">ATP synthase F1 sector gamma subunit</fullName>
    </alternativeName>
    <alternativeName>
        <fullName evidence="1">F-ATPase gamma subunit</fullName>
    </alternativeName>
</protein>
<evidence type="ECO:0000255" key="1">
    <source>
        <dbReference type="HAMAP-Rule" id="MF_00815"/>
    </source>
</evidence>
<accession>B0KRA9</accession>
<gene>
    <name evidence="1" type="primary">atpG</name>
    <name type="ordered locus">PputGB1_5432</name>
</gene>
<dbReference type="EMBL" id="CP000926">
    <property type="protein sequence ID" value="ABZ01314.1"/>
    <property type="molecule type" value="Genomic_DNA"/>
</dbReference>
<dbReference type="RefSeq" id="WP_012274910.1">
    <property type="nucleotide sequence ID" value="NC_010322.1"/>
</dbReference>
<dbReference type="SMR" id="B0KRA9"/>
<dbReference type="KEGG" id="ppg:PputGB1_5432"/>
<dbReference type="eggNOG" id="COG0224">
    <property type="taxonomic scope" value="Bacteria"/>
</dbReference>
<dbReference type="HOGENOM" id="CLU_050669_0_1_6"/>
<dbReference type="Proteomes" id="UP000002157">
    <property type="component" value="Chromosome"/>
</dbReference>
<dbReference type="GO" id="GO:0005886">
    <property type="term" value="C:plasma membrane"/>
    <property type="evidence" value="ECO:0007669"/>
    <property type="project" value="UniProtKB-SubCell"/>
</dbReference>
<dbReference type="GO" id="GO:0045259">
    <property type="term" value="C:proton-transporting ATP synthase complex"/>
    <property type="evidence" value="ECO:0007669"/>
    <property type="project" value="UniProtKB-KW"/>
</dbReference>
<dbReference type="GO" id="GO:0005524">
    <property type="term" value="F:ATP binding"/>
    <property type="evidence" value="ECO:0007669"/>
    <property type="project" value="UniProtKB-UniRule"/>
</dbReference>
<dbReference type="GO" id="GO:0046933">
    <property type="term" value="F:proton-transporting ATP synthase activity, rotational mechanism"/>
    <property type="evidence" value="ECO:0007669"/>
    <property type="project" value="UniProtKB-UniRule"/>
</dbReference>
<dbReference type="GO" id="GO:0042777">
    <property type="term" value="P:proton motive force-driven plasma membrane ATP synthesis"/>
    <property type="evidence" value="ECO:0007669"/>
    <property type="project" value="UniProtKB-UniRule"/>
</dbReference>
<dbReference type="CDD" id="cd12151">
    <property type="entry name" value="F1-ATPase_gamma"/>
    <property type="match status" value="1"/>
</dbReference>
<dbReference type="FunFam" id="1.10.287.80:FF:000005">
    <property type="entry name" value="ATP synthase gamma chain"/>
    <property type="match status" value="1"/>
</dbReference>
<dbReference type="FunFam" id="3.40.1380.10:FF:000001">
    <property type="entry name" value="ATP synthase gamma chain"/>
    <property type="match status" value="1"/>
</dbReference>
<dbReference type="Gene3D" id="3.40.1380.10">
    <property type="match status" value="1"/>
</dbReference>
<dbReference type="Gene3D" id="1.10.287.80">
    <property type="entry name" value="ATP synthase, gamma subunit, helix hairpin domain"/>
    <property type="match status" value="1"/>
</dbReference>
<dbReference type="HAMAP" id="MF_00815">
    <property type="entry name" value="ATP_synth_gamma_bact"/>
    <property type="match status" value="1"/>
</dbReference>
<dbReference type="InterPro" id="IPR035968">
    <property type="entry name" value="ATP_synth_F1_ATPase_gsu"/>
</dbReference>
<dbReference type="InterPro" id="IPR000131">
    <property type="entry name" value="ATP_synth_F1_gsu"/>
</dbReference>
<dbReference type="InterPro" id="IPR023632">
    <property type="entry name" value="ATP_synth_F1_gsu_CS"/>
</dbReference>
<dbReference type="NCBIfam" id="TIGR01146">
    <property type="entry name" value="ATPsyn_F1gamma"/>
    <property type="match status" value="1"/>
</dbReference>
<dbReference type="NCBIfam" id="NF004144">
    <property type="entry name" value="PRK05621.1-1"/>
    <property type="match status" value="1"/>
</dbReference>
<dbReference type="PANTHER" id="PTHR11693">
    <property type="entry name" value="ATP SYNTHASE GAMMA CHAIN"/>
    <property type="match status" value="1"/>
</dbReference>
<dbReference type="PANTHER" id="PTHR11693:SF22">
    <property type="entry name" value="ATP SYNTHASE SUBUNIT GAMMA, MITOCHONDRIAL"/>
    <property type="match status" value="1"/>
</dbReference>
<dbReference type="Pfam" id="PF00231">
    <property type="entry name" value="ATP-synt"/>
    <property type="match status" value="1"/>
</dbReference>
<dbReference type="PRINTS" id="PR00126">
    <property type="entry name" value="ATPASEGAMMA"/>
</dbReference>
<dbReference type="SUPFAM" id="SSF52943">
    <property type="entry name" value="ATP synthase (F1-ATPase), gamma subunit"/>
    <property type="match status" value="1"/>
</dbReference>
<dbReference type="PROSITE" id="PS00153">
    <property type="entry name" value="ATPASE_GAMMA"/>
    <property type="match status" value="1"/>
</dbReference>
<feature type="chain" id="PRO_1000083800" description="ATP synthase gamma chain">
    <location>
        <begin position="1"/>
        <end position="286"/>
    </location>
</feature>